<organism>
    <name type="scientific">Danio rerio</name>
    <name type="common">Zebrafish</name>
    <name type="synonym">Brachydanio rerio</name>
    <dbReference type="NCBI Taxonomy" id="7955"/>
    <lineage>
        <taxon>Eukaryota</taxon>
        <taxon>Metazoa</taxon>
        <taxon>Chordata</taxon>
        <taxon>Craniata</taxon>
        <taxon>Vertebrata</taxon>
        <taxon>Euteleostomi</taxon>
        <taxon>Actinopterygii</taxon>
        <taxon>Neopterygii</taxon>
        <taxon>Teleostei</taxon>
        <taxon>Ostariophysi</taxon>
        <taxon>Cypriniformes</taxon>
        <taxon>Danionidae</taxon>
        <taxon>Danioninae</taxon>
        <taxon>Danio</taxon>
    </lineage>
</organism>
<protein>
    <recommendedName>
        <fullName>Epithelial membrane protein 2</fullName>
        <shortName>EMP-2</shortName>
    </recommendedName>
</protein>
<feature type="chain" id="PRO_0000430725" description="Epithelial membrane protein 2">
    <location>
        <begin position="1"/>
        <end position="161"/>
    </location>
</feature>
<feature type="transmembrane region" description="Helical; Name=1" evidence="4">
    <location>
        <begin position="1"/>
        <end position="21"/>
    </location>
</feature>
<feature type="transmembrane region" description="Helical; Name=2" evidence="4">
    <location>
        <begin position="67"/>
        <end position="87"/>
    </location>
</feature>
<feature type="transmembrane region" description="Helical; Name=3" evidence="4">
    <location>
        <begin position="95"/>
        <end position="115"/>
    </location>
</feature>
<feature type="transmembrane region" description="Helical; Name=4" evidence="4">
    <location>
        <begin position="137"/>
        <end position="157"/>
    </location>
</feature>
<evidence type="ECO:0000250" key="1">
    <source>
        <dbReference type="UniProtKB" id="O88662"/>
    </source>
</evidence>
<evidence type="ECO:0000250" key="2">
    <source>
        <dbReference type="UniProtKB" id="P54851"/>
    </source>
</evidence>
<evidence type="ECO:0000250" key="3">
    <source>
        <dbReference type="UniProtKB" id="Q66HH2"/>
    </source>
</evidence>
<evidence type="ECO:0000255" key="4"/>
<evidence type="ECO:0000269" key="5">
    <source>
    </source>
</evidence>
<evidence type="ECO:0000305" key="6"/>
<gene>
    <name type="primary">emp2</name>
    <name type="ORF">zgc:100935</name>
</gene>
<keyword id="KW-1003">Cell membrane</keyword>
<keyword id="KW-0963">Cytoplasm</keyword>
<keyword id="KW-0333">Golgi apparatus</keyword>
<keyword id="KW-0472">Membrane</keyword>
<keyword id="KW-0539">Nucleus</keyword>
<keyword id="KW-1185">Reference proteome</keyword>
<keyword id="KW-0812">Transmembrane</keyword>
<keyword id="KW-1133">Transmembrane helix</keyword>
<proteinExistence type="evidence at transcript level"/>
<name>EMP2_DANRE</name>
<comment type="function">
    <text evidence="1 2 5">Functions as a key regulator of cell membrane composition by regulating protein surface expression. Also, plays a role in regulation of processes including cell migration, cell proliferation, cell contraction and cell adhesion. May play a role in glomerular filtration (PubMed:24814193).</text>
</comment>
<comment type="subcellular location">
    <subcellularLocation>
        <location evidence="1">Golgi apparatus membrane</location>
        <topology evidence="4">Multi-pass membrane protein</topology>
    </subcellularLocation>
    <subcellularLocation>
        <location evidence="1 2">Cell membrane</location>
    </subcellularLocation>
    <subcellularLocation>
        <location evidence="1">Apical cell membrane</location>
    </subcellularLocation>
    <subcellularLocation>
        <location evidence="1 2">Membrane raft</location>
    </subcellularLocation>
    <subcellularLocation>
        <location evidence="1 2 3">Cytoplasm</location>
    </subcellularLocation>
    <subcellularLocation>
        <location evidence="3">Nucleus</location>
    </subcellularLocation>
    <subcellularLocation>
        <location evidence="1">Cytoplasm</location>
        <location evidence="1">Perinuclear region</location>
    </subcellularLocation>
</comment>
<comment type="tissue specificity">
    <text evidence="5">Expressed in the arches, orbits, pectoral fins, vessels, pronephric renal tubules, and glomeruli.</text>
</comment>
<comment type="similarity">
    <text evidence="6">Belongs to the PMP-22/EMP/MP20 family.</text>
</comment>
<sequence>MLVILAFIILFHITSAILLFIATINNAWRIKGDFSMDLWYNCNTTACYDIPKSATYDAAYLQAVQATMILATILCCVGFFVFILQLFRLKQGERFVFTAIIQLLSAFCVMTGASIYTAEGLTFNGQEFKNAEYGYSFVVAWVAFPMTLLSGLMYLVLRKRK</sequence>
<accession>F1QIK8</accession>
<dbReference type="EMBL" id="CR954963">
    <property type="status" value="NOT_ANNOTATED_CDS"/>
    <property type="molecule type" value="Genomic_DNA"/>
</dbReference>
<dbReference type="RefSeq" id="XP_017209506.1">
    <property type="nucleotide sequence ID" value="XM_017354017.1"/>
</dbReference>
<dbReference type="RefSeq" id="XP_068072780.1">
    <property type="nucleotide sequence ID" value="XM_068216679.1"/>
</dbReference>
<dbReference type="SMR" id="F1QIK8"/>
<dbReference type="FunCoup" id="F1QIK8">
    <property type="interactions" value="1072"/>
</dbReference>
<dbReference type="STRING" id="7955.ENSDARP00000065494"/>
<dbReference type="PaxDb" id="7955-ENSDARP00000065494"/>
<dbReference type="Ensembl" id="ENSDART00000065495">
    <property type="protein sequence ID" value="ENSDARP00000065494"/>
    <property type="gene ID" value="ENSDARG00000044588"/>
</dbReference>
<dbReference type="GeneID" id="445506"/>
<dbReference type="eggNOG" id="ENOG502RYYE">
    <property type="taxonomic scope" value="Eukaryota"/>
</dbReference>
<dbReference type="HOGENOM" id="CLU_138632_0_0_1"/>
<dbReference type="InParanoid" id="F1QIK8"/>
<dbReference type="OMA" id="VAWVSFP"/>
<dbReference type="OrthoDB" id="9939098at2759"/>
<dbReference type="TreeFam" id="TF330414"/>
<dbReference type="PRO" id="PR:F1QIK8"/>
<dbReference type="Proteomes" id="UP000000437">
    <property type="component" value="Chromosome 3"/>
</dbReference>
<dbReference type="Bgee" id="ENSDARG00000044588">
    <property type="expression patterns" value="Expressed in somite and 31 other cell types or tissues"/>
</dbReference>
<dbReference type="GO" id="GO:0016324">
    <property type="term" value="C:apical plasma membrane"/>
    <property type="evidence" value="ECO:0000250"/>
    <property type="project" value="UniProtKB"/>
</dbReference>
<dbReference type="GO" id="GO:0005737">
    <property type="term" value="C:cytoplasm"/>
    <property type="evidence" value="ECO:0000250"/>
    <property type="project" value="UniProtKB"/>
</dbReference>
<dbReference type="GO" id="GO:0005794">
    <property type="term" value="C:Golgi apparatus"/>
    <property type="evidence" value="ECO:0000250"/>
    <property type="project" value="UniProtKB"/>
</dbReference>
<dbReference type="GO" id="GO:0000139">
    <property type="term" value="C:Golgi membrane"/>
    <property type="evidence" value="ECO:0007669"/>
    <property type="project" value="UniProtKB-SubCell"/>
</dbReference>
<dbReference type="GO" id="GO:0045121">
    <property type="term" value="C:membrane raft"/>
    <property type="evidence" value="ECO:0007669"/>
    <property type="project" value="UniProtKB-SubCell"/>
</dbReference>
<dbReference type="GO" id="GO:0005634">
    <property type="term" value="C:nucleus"/>
    <property type="evidence" value="ECO:0000250"/>
    <property type="project" value="UniProtKB"/>
</dbReference>
<dbReference type="GO" id="GO:0048471">
    <property type="term" value="C:perinuclear region of cytoplasm"/>
    <property type="evidence" value="ECO:0007669"/>
    <property type="project" value="UniProtKB-SubCell"/>
</dbReference>
<dbReference type="GO" id="GO:0005886">
    <property type="term" value="C:plasma membrane"/>
    <property type="evidence" value="ECO:0000250"/>
    <property type="project" value="UniProtKB"/>
</dbReference>
<dbReference type="GO" id="GO:0008284">
    <property type="term" value="P:positive regulation of cell population proliferation"/>
    <property type="evidence" value="ECO:0000250"/>
    <property type="project" value="UniProtKB"/>
</dbReference>
<dbReference type="GO" id="GO:0003093">
    <property type="term" value="P:regulation of glomerular filtration"/>
    <property type="evidence" value="ECO:0000315"/>
    <property type="project" value="UniProtKB"/>
</dbReference>
<dbReference type="FunFam" id="1.20.140.150:FF:000023">
    <property type="entry name" value="Epithelial membrane protein 2"/>
    <property type="match status" value="1"/>
</dbReference>
<dbReference type="Gene3D" id="1.20.140.150">
    <property type="match status" value="1"/>
</dbReference>
<dbReference type="InterPro" id="IPR050579">
    <property type="entry name" value="PMP-22/EMP/MP20-like"/>
</dbReference>
<dbReference type="InterPro" id="IPR004031">
    <property type="entry name" value="PMP22/EMP/MP20/Claudin"/>
</dbReference>
<dbReference type="InterPro" id="IPR004032">
    <property type="entry name" value="PMP22_EMP_MP20"/>
</dbReference>
<dbReference type="PANTHER" id="PTHR10671:SF32">
    <property type="entry name" value="EPITHELIAL MEMBRANE PROTEIN 2"/>
    <property type="match status" value="1"/>
</dbReference>
<dbReference type="PANTHER" id="PTHR10671">
    <property type="entry name" value="EPITHELIAL MEMBRANE PROTEIN-RELATED"/>
    <property type="match status" value="1"/>
</dbReference>
<dbReference type="Pfam" id="PF00822">
    <property type="entry name" value="PMP22_Claudin"/>
    <property type="match status" value="1"/>
</dbReference>
<dbReference type="PRINTS" id="PR01453">
    <property type="entry name" value="EPMEMFAMILY"/>
</dbReference>
<dbReference type="PROSITE" id="PS01221">
    <property type="entry name" value="PMP22_1"/>
    <property type="match status" value="1"/>
</dbReference>
<dbReference type="PROSITE" id="PS01222">
    <property type="entry name" value="PMP22_2"/>
    <property type="match status" value="1"/>
</dbReference>
<reference key="1">
    <citation type="journal article" date="2013" name="Nature">
        <title>The zebrafish reference genome sequence and its relationship to the human genome.</title>
        <authorList>
            <person name="Howe K."/>
            <person name="Clark M.D."/>
            <person name="Torroja C.F."/>
            <person name="Torrance J."/>
            <person name="Berthelot C."/>
            <person name="Muffato M."/>
            <person name="Collins J.E."/>
            <person name="Humphray S."/>
            <person name="McLaren K."/>
            <person name="Matthews L."/>
            <person name="McLaren S."/>
            <person name="Sealy I."/>
            <person name="Caccamo M."/>
            <person name="Churcher C."/>
            <person name="Scott C."/>
            <person name="Barrett J.C."/>
            <person name="Koch R."/>
            <person name="Rauch G.J."/>
            <person name="White S."/>
            <person name="Chow W."/>
            <person name="Kilian B."/>
            <person name="Quintais L.T."/>
            <person name="Guerra-Assuncao J.A."/>
            <person name="Zhou Y."/>
            <person name="Gu Y."/>
            <person name="Yen J."/>
            <person name="Vogel J.H."/>
            <person name="Eyre T."/>
            <person name="Redmond S."/>
            <person name="Banerjee R."/>
            <person name="Chi J."/>
            <person name="Fu B."/>
            <person name="Langley E."/>
            <person name="Maguire S.F."/>
            <person name="Laird G.K."/>
            <person name="Lloyd D."/>
            <person name="Kenyon E."/>
            <person name="Donaldson S."/>
            <person name="Sehra H."/>
            <person name="Almeida-King J."/>
            <person name="Loveland J."/>
            <person name="Trevanion S."/>
            <person name="Jones M."/>
            <person name="Quail M."/>
            <person name="Willey D."/>
            <person name="Hunt A."/>
            <person name="Burton J."/>
            <person name="Sims S."/>
            <person name="McLay K."/>
            <person name="Plumb B."/>
            <person name="Davis J."/>
            <person name="Clee C."/>
            <person name="Oliver K."/>
            <person name="Clark R."/>
            <person name="Riddle C."/>
            <person name="Elliot D."/>
            <person name="Threadgold G."/>
            <person name="Harden G."/>
            <person name="Ware D."/>
            <person name="Begum S."/>
            <person name="Mortimore B."/>
            <person name="Kerry G."/>
            <person name="Heath P."/>
            <person name="Phillimore B."/>
            <person name="Tracey A."/>
            <person name="Corby N."/>
            <person name="Dunn M."/>
            <person name="Johnson C."/>
            <person name="Wood J."/>
            <person name="Clark S."/>
            <person name="Pelan S."/>
            <person name="Griffiths G."/>
            <person name="Smith M."/>
            <person name="Glithero R."/>
            <person name="Howden P."/>
            <person name="Barker N."/>
            <person name="Lloyd C."/>
            <person name="Stevens C."/>
            <person name="Harley J."/>
            <person name="Holt K."/>
            <person name="Panagiotidis G."/>
            <person name="Lovell J."/>
            <person name="Beasley H."/>
            <person name="Henderson C."/>
            <person name="Gordon D."/>
            <person name="Auger K."/>
            <person name="Wright D."/>
            <person name="Collins J."/>
            <person name="Raisen C."/>
            <person name="Dyer L."/>
            <person name="Leung K."/>
            <person name="Robertson L."/>
            <person name="Ambridge K."/>
            <person name="Leongamornlert D."/>
            <person name="McGuire S."/>
            <person name="Gilderthorp R."/>
            <person name="Griffiths C."/>
            <person name="Manthravadi D."/>
            <person name="Nichol S."/>
            <person name="Barker G."/>
            <person name="Whitehead S."/>
            <person name="Kay M."/>
            <person name="Brown J."/>
            <person name="Murnane C."/>
            <person name="Gray E."/>
            <person name="Humphries M."/>
            <person name="Sycamore N."/>
            <person name="Barker D."/>
            <person name="Saunders D."/>
            <person name="Wallis J."/>
            <person name="Babbage A."/>
            <person name="Hammond S."/>
            <person name="Mashreghi-Mohammadi M."/>
            <person name="Barr L."/>
            <person name="Martin S."/>
            <person name="Wray P."/>
            <person name="Ellington A."/>
            <person name="Matthews N."/>
            <person name="Ellwood M."/>
            <person name="Woodmansey R."/>
            <person name="Clark G."/>
            <person name="Cooper J."/>
            <person name="Tromans A."/>
            <person name="Grafham D."/>
            <person name="Skuce C."/>
            <person name="Pandian R."/>
            <person name="Andrews R."/>
            <person name="Harrison E."/>
            <person name="Kimberley A."/>
            <person name="Garnett J."/>
            <person name="Fosker N."/>
            <person name="Hall R."/>
            <person name="Garner P."/>
            <person name="Kelly D."/>
            <person name="Bird C."/>
            <person name="Palmer S."/>
            <person name="Gehring I."/>
            <person name="Berger A."/>
            <person name="Dooley C.M."/>
            <person name="Ersan-Urun Z."/>
            <person name="Eser C."/>
            <person name="Geiger H."/>
            <person name="Geisler M."/>
            <person name="Karotki L."/>
            <person name="Kirn A."/>
            <person name="Konantz J."/>
            <person name="Konantz M."/>
            <person name="Oberlander M."/>
            <person name="Rudolph-Geiger S."/>
            <person name="Teucke M."/>
            <person name="Lanz C."/>
            <person name="Raddatz G."/>
            <person name="Osoegawa K."/>
            <person name="Zhu B."/>
            <person name="Rapp A."/>
            <person name="Widaa S."/>
            <person name="Langford C."/>
            <person name="Yang F."/>
            <person name="Schuster S.C."/>
            <person name="Carter N.P."/>
            <person name="Harrow J."/>
            <person name="Ning Z."/>
            <person name="Herrero J."/>
            <person name="Searle S.M."/>
            <person name="Enright A."/>
            <person name="Geisler R."/>
            <person name="Plasterk R.H."/>
            <person name="Lee C."/>
            <person name="Westerfield M."/>
            <person name="de Jong P.J."/>
            <person name="Zon L.I."/>
            <person name="Postlethwait J.H."/>
            <person name="Nusslein-Volhard C."/>
            <person name="Hubbard T.J."/>
            <person name="Roest Crollius H."/>
            <person name="Rogers J."/>
            <person name="Stemple D.L."/>
        </authorList>
    </citation>
    <scope>NUCLEOTIDE SEQUENCE [LARGE SCALE GENOMIC DNA]</scope>
    <source>
        <strain>Tuebingen</strain>
    </source>
</reference>
<reference key="2">
    <citation type="journal article" date="2014" name="Am. J. Hum. Genet.">
        <title>Mutations in EMP2 cause childhood-onset nephrotic syndrome.</title>
        <authorList>
            <person name="Gee H.Y."/>
            <person name="Ashraf S."/>
            <person name="Wan X."/>
            <person name="Vega-Warner V."/>
            <person name="Esteve-Rudd J."/>
            <person name="Lovric S."/>
            <person name="Fang H."/>
            <person name="Hurd T.W."/>
            <person name="Sadowski C.E."/>
            <person name="Allen S.J."/>
            <person name="Otto E.A."/>
            <person name="Korkmaz E."/>
            <person name="Washburn J."/>
            <person name="Levy S."/>
            <person name="Williams D.S."/>
            <person name="Bakkaloglu S.A."/>
            <person name="Zolotnitskaya A."/>
            <person name="Ozaltin F."/>
            <person name="Zhou W."/>
            <person name="Hildebrandt F."/>
        </authorList>
    </citation>
    <scope>FUNCTION</scope>
    <scope>TISSUE SPECIFICITY</scope>
</reference>